<proteinExistence type="inferred from homology"/>
<name>CYB_CRYFE</name>
<reference key="1">
    <citation type="journal article" date="2004" name="Zool. Scr.">
        <title>First molecular evidence for reassessing phylogenetic affinities between genets (Genetta) and the enigmatic genet-like taxa Osbornictis, Poiana and Prionodon (Carnivora, Viverridae).</title>
        <authorList>
            <person name="Gaubert P."/>
            <person name="Tranier M."/>
            <person name="Delmas A.-S."/>
            <person name="Colyn M."/>
            <person name="Veron G."/>
        </authorList>
    </citation>
    <scope>NUCLEOTIDE SEQUENCE [GENOMIC DNA]</scope>
</reference>
<feature type="chain" id="PRO_0000060836" description="Cytochrome b">
    <location>
        <begin position="1"/>
        <end position="379"/>
    </location>
</feature>
<feature type="transmembrane region" description="Helical" evidence="2">
    <location>
        <begin position="33"/>
        <end position="53"/>
    </location>
</feature>
<feature type="transmembrane region" description="Helical" evidence="2">
    <location>
        <begin position="77"/>
        <end position="98"/>
    </location>
</feature>
<feature type="transmembrane region" description="Helical" evidence="2">
    <location>
        <begin position="113"/>
        <end position="133"/>
    </location>
</feature>
<feature type="transmembrane region" description="Helical" evidence="2">
    <location>
        <begin position="178"/>
        <end position="198"/>
    </location>
</feature>
<feature type="transmembrane region" description="Helical" evidence="2">
    <location>
        <begin position="226"/>
        <end position="246"/>
    </location>
</feature>
<feature type="transmembrane region" description="Helical" evidence="2">
    <location>
        <begin position="288"/>
        <end position="308"/>
    </location>
</feature>
<feature type="transmembrane region" description="Helical" evidence="2">
    <location>
        <begin position="320"/>
        <end position="340"/>
    </location>
</feature>
<feature type="transmembrane region" description="Helical" evidence="2">
    <location>
        <begin position="347"/>
        <end position="367"/>
    </location>
</feature>
<feature type="binding site" description="axial binding residue" evidence="2">
    <location>
        <position position="83"/>
    </location>
    <ligand>
        <name>heme b</name>
        <dbReference type="ChEBI" id="CHEBI:60344"/>
        <label>b562</label>
    </ligand>
    <ligandPart>
        <name>Fe</name>
        <dbReference type="ChEBI" id="CHEBI:18248"/>
    </ligandPart>
</feature>
<feature type="binding site" description="axial binding residue" evidence="2">
    <location>
        <position position="97"/>
    </location>
    <ligand>
        <name>heme b</name>
        <dbReference type="ChEBI" id="CHEBI:60344"/>
        <label>b566</label>
    </ligand>
    <ligandPart>
        <name>Fe</name>
        <dbReference type="ChEBI" id="CHEBI:18248"/>
    </ligandPart>
</feature>
<feature type="binding site" description="axial binding residue" evidence="2">
    <location>
        <position position="182"/>
    </location>
    <ligand>
        <name>heme b</name>
        <dbReference type="ChEBI" id="CHEBI:60344"/>
        <label>b562</label>
    </ligand>
    <ligandPart>
        <name>Fe</name>
        <dbReference type="ChEBI" id="CHEBI:18248"/>
    </ligandPart>
</feature>
<feature type="binding site" description="axial binding residue" evidence="2">
    <location>
        <position position="196"/>
    </location>
    <ligand>
        <name>heme b</name>
        <dbReference type="ChEBI" id="CHEBI:60344"/>
        <label>b566</label>
    </ligand>
    <ligandPart>
        <name>Fe</name>
        <dbReference type="ChEBI" id="CHEBI:18248"/>
    </ligandPart>
</feature>
<feature type="binding site" evidence="2">
    <location>
        <position position="201"/>
    </location>
    <ligand>
        <name>a ubiquinone</name>
        <dbReference type="ChEBI" id="CHEBI:16389"/>
    </ligand>
</feature>
<sequence length="379" mass="42459">MANIRKSHPLIKIVNESFIDLPTPSNISAWWNFGSLLGVCLALQILTGLFLAMHYTSDTATAFSSVTHICRDVNYGWIIRYMHANGASMFFICVFMHVGRGMYYGSYTLSETWNIGIILLFTIMATAFMGYVLPWGQMSFWGATVITNLLSAIPYVGTNLVEWIWGGFSVDKATLTRFFAFHFILPFIISALVAVHLLFLHETGSNNPSGLVSNSDKIPFHPYYTIKDILGLLLLILMLMLLVLFSPDLLGDPDNYTPANPLNTPPHIKPEWYFLFAYAILRSIPNKLGGVMALVLSILVLAIVPLLHTSKQRGMTFRPLSQCLLWLLVADLLTLTWIGGQPVEYPFITIGQLASILYFPTILILMPISGIIENQLLTW</sequence>
<accession>Q9B9G0</accession>
<keyword id="KW-0249">Electron transport</keyword>
<keyword id="KW-0349">Heme</keyword>
<keyword id="KW-0408">Iron</keyword>
<keyword id="KW-0472">Membrane</keyword>
<keyword id="KW-0479">Metal-binding</keyword>
<keyword id="KW-0496">Mitochondrion</keyword>
<keyword id="KW-0999">Mitochondrion inner membrane</keyword>
<keyword id="KW-0679">Respiratory chain</keyword>
<keyword id="KW-0812">Transmembrane</keyword>
<keyword id="KW-1133">Transmembrane helix</keyword>
<keyword id="KW-0813">Transport</keyword>
<keyword id="KW-0830">Ubiquinone</keyword>
<gene>
    <name type="primary">MT-CYB</name>
    <name type="synonym">COB</name>
    <name type="synonym">CYTB</name>
    <name type="synonym">MTCYB</name>
</gene>
<comment type="function">
    <text evidence="2">Component of the ubiquinol-cytochrome c reductase complex (complex III or cytochrome b-c1 complex) that is part of the mitochondrial respiratory chain. The b-c1 complex mediates electron transfer from ubiquinol to cytochrome c. Contributes to the generation of a proton gradient across the mitochondrial membrane that is then used for ATP synthesis.</text>
</comment>
<comment type="cofactor">
    <cofactor evidence="2">
        <name>heme b</name>
        <dbReference type="ChEBI" id="CHEBI:60344"/>
    </cofactor>
    <text evidence="2">Binds 2 heme b groups non-covalently.</text>
</comment>
<comment type="subunit">
    <text evidence="2">The cytochrome bc1 complex contains 11 subunits: 3 respiratory subunits (MT-CYB, CYC1 and UQCRFS1), 2 core proteins (UQCRC1 and UQCRC2) and 6 low-molecular weight proteins (UQCRH/QCR6, UQCRB/QCR7, UQCRQ/QCR8, UQCR10/QCR9, UQCR11/QCR10 and a cleavage product of UQCRFS1). This cytochrome bc1 complex then forms a dimer.</text>
</comment>
<comment type="subcellular location">
    <subcellularLocation>
        <location evidence="2">Mitochondrion inner membrane</location>
        <topology evidence="2">Multi-pass membrane protein</topology>
    </subcellularLocation>
</comment>
<comment type="miscellaneous">
    <text evidence="1">Heme 1 (or BL or b562) is low-potential and absorbs at about 562 nm, and heme 2 (or BH or b566) is high-potential and absorbs at about 566 nm.</text>
</comment>
<comment type="similarity">
    <text evidence="3 4">Belongs to the cytochrome b family.</text>
</comment>
<comment type="caution">
    <text evidence="2">The full-length protein contains only eight transmembrane helices, not nine as predicted by bioinformatics tools.</text>
</comment>
<dbReference type="EMBL" id="AF125139">
    <property type="protein sequence ID" value="AAG60330.3"/>
    <property type="molecule type" value="Genomic_DNA"/>
</dbReference>
<dbReference type="SMR" id="Q9B9G0"/>
<dbReference type="GO" id="GO:0005743">
    <property type="term" value="C:mitochondrial inner membrane"/>
    <property type="evidence" value="ECO:0007669"/>
    <property type="project" value="UniProtKB-SubCell"/>
</dbReference>
<dbReference type="GO" id="GO:0045275">
    <property type="term" value="C:respiratory chain complex III"/>
    <property type="evidence" value="ECO:0007669"/>
    <property type="project" value="InterPro"/>
</dbReference>
<dbReference type="GO" id="GO:0046872">
    <property type="term" value="F:metal ion binding"/>
    <property type="evidence" value="ECO:0007669"/>
    <property type="project" value="UniProtKB-KW"/>
</dbReference>
<dbReference type="GO" id="GO:0008121">
    <property type="term" value="F:ubiquinol-cytochrome-c reductase activity"/>
    <property type="evidence" value="ECO:0007669"/>
    <property type="project" value="InterPro"/>
</dbReference>
<dbReference type="GO" id="GO:0006122">
    <property type="term" value="P:mitochondrial electron transport, ubiquinol to cytochrome c"/>
    <property type="evidence" value="ECO:0007669"/>
    <property type="project" value="TreeGrafter"/>
</dbReference>
<dbReference type="CDD" id="cd00290">
    <property type="entry name" value="cytochrome_b_C"/>
    <property type="match status" value="1"/>
</dbReference>
<dbReference type="CDD" id="cd00284">
    <property type="entry name" value="Cytochrome_b_N"/>
    <property type="match status" value="1"/>
</dbReference>
<dbReference type="FunFam" id="1.20.810.10:FF:000002">
    <property type="entry name" value="Cytochrome b"/>
    <property type="match status" value="1"/>
</dbReference>
<dbReference type="Gene3D" id="1.20.810.10">
    <property type="entry name" value="Cytochrome Bc1 Complex, Chain C"/>
    <property type="match status" value="1"/>
</dbReference>
<dbReference type="InterPro" id="IPR005798">
    <property type="entry name" value="Cyt_b/b6_C"/>
</dbReference>
<dbReference type="InterPro" id="IPR036150">
    <property type="entry name" value="Cyt_b/b6_C_sf"/>
</dbReference>
<dbReference type="InterPro" id="IPR005797">
    <property type="entry name" value="Cyt_b/b6_N"/>
</dbReference>
<dbReference type="InterPro" id="IPR027387">
    <property type="entry name" value="Cytb/b6-like_sf"/>
</dbReference>
<dbReference type="InterPro" id="IPR030689">
    <property type="entry name" value="Cytochrome_b"/>
</dbReference>
<dbReference type="InterPro" id="IPR048260">
    <property type="entry name" value="Cytochrome_b_C_euk/bac"/>
</dbReference>
<dbReference type="InterPro" id="IPR048259">
    <property type="entry name" value="Cytochrome_b_N_euk/bac"/>
</dbReference>
<dbReference type="InterPro" id="IPR016174">
    <property type="entry name" value="Di-haem_cyt_TM"/>
</dbReference>
<dbReference type="PANTHER" id="PTHR19271">
    <property type="entry name" value="CYTOCHROME B"/>
    <property type="match status" value="1"/>
</dbReference>
<dbReference type="PANTHER" id="PTHR19271:SF16">
    <property type="entry name" value="CYTOCHROME B"/>
    <property type="match status" value="1"/>
</dbReference>
<dbReference type="Pfam" id="PF00032">
    <property type="entry name" value="Cytochrom_B_C"/>
    <property type="match status" value="1"/>
</dbReference>
<dbReference type="Pfam" id="PF00033">
    <property type="entry name" value="Cytochrome_B"/>
    <property type="match status" value="1"/>
</dbReference>
<dbReference type="PIRSF" id="PIRSF038885">
    <property type="entry name" value="COB"/>
    <property type="match status" value="1"/>
</dbReference>
<dbReference type="SUPFAM" id="SSF81648">
    <property type="entry name" value="a domain/subunit of cytochrome bc1 complex (Ubiquinol-cytochrome c reductase)"/>
    <property type="match status" value="1"/>
</dbReference>
<dbReference type="SUPFAM" id="SSF81342">
    <property type="entry name" value="Transmembrane di-heme cytochromes"/>
    <property type="match status" value="1"/>
</dbReference>
<dbReference type="PROSITE" id="PS51003">
    <property type="entry name" value="CYTB_CTER"/>
    <property type="match status" value="1"/>
</dbReference>
<dbReference type="PROSITE" id="PS51002">
    <property type="entry name" value="CYTB_NTER"/>
    <property type="match status" value="1"/>
</dbReference>
<geneLocation type="mitochondrion"/>
<evidence type="ECO:0000250" key="1"/>
<evidence type="ECO:0000250" key="2">
    <source>
        <dbReference type="UniProtKB" id="P00157"/>
    </source>
</evidence>
<evidence type="ECO:0000255" key="3">
    <source>
        <dbReference type="PROSITE-ProRule" id="PRU00967"/>
    </source>
</evidence>
<evidence type="ECO:0000255" key="4">
    <source>
        <dbReference type="PROSITE-ProRule" id="PRU00968"/>
    </source>
</evidence>
<protein>
    <recommendedName>
        <fullName>Cytochrome b</fullName>
    </recommendedName>
    <alternativeName>
        <fullName>Complex III subunit 3</fullName>
    </alternativeName>
    <alternativeName>
        <fullName>Complex III subunit III</fullName>
    </alternativeName>
    <alternativeName>
        <fullName>Cytochrome b-c1 complex subunit 3</fullName>
    </alternativeName>
    <alternativeName>
        <fullName>Ubiquinol-cytochrome-c reductase complex cytochrome b subunit</fullName>
    </alternativeName>
</protein>
<organism>
    <name type="scientific">Cryptoprocta ferox</name>
    <name type="common">Fossa</name>
    <dbReference type="NCBI Taxonomy" id="94188"/>
    <lineage>
        <taxon>Eukaryota</taxon>
        <taxon>Metazoa</taxon>
        <taxon>Chordata</taxon>
        <taxon>Craniata</taxon>
        <taxon>Vertebrata</taxon>
        <taxon>Euteleostomi</taxon>
        <taxon>Mammalia</taxon>
        <taxon>Eutheria</taxon>
        <taxon>Laurasiatheria</taxon>
        <taxon>Carnivora</taxon>
        <taxon>Feliformia</taxon>
        <taxon>Eupleridae</taxon>
        <taxon>Euplerinae</taxon>
        <taxon>Cryptoprocta</taxon>
    </lineage>
</organism>